<sequence>MFETTAKLRSAFLAYFETQGHQVVDSSSLVPHNDPTLLFTNAGMNQFKDVFLGMDKRSYSRAVSSQRCVRAGGKHNDLDNVGYTARHHTFFEMLGNFSFGDYFKEEAIRFAWTFLTETLKLPTERLCVTIYETDDEAFELWNKKIGVAAENIIRIGDNKGAPYASDNFWQMGDTGPCGPCSEIFYDHGDHIWGGRPGTPEEDGDRFIEIWNIVFMQYNRQADGAMLPLPKPSVDTGMGIERIAAIMQGVHSNYEIDIFKQLIAKTAEIIGVSDLENKSLRVIADHIRSCAFLIADGVMPSNEGRGYVLRRIIRRAVRHGNKLGATDTFFYKLVPTLISVMGDAAKGLVETQVIVEKALKAEEEQFARTLERGLGLLDNALNELSGKVLDGDTAFKLYDTYGFPVDLTADVCRERDITVDEAGFEAAMAEQRSRAQAAGNFGADYNKQLIIDEETQFCGYKGLSGEANVVALYLDGQAVNEVTQGQDAVVVLNNTPFYAESGGQVGDKGVLSAQGINFSVTDTQKFGQATGHQGKVLEGSIKVGTKLAAEVNKDLRQRTELNHSVTHLLHAALRQVIGTHVTQKGSLVNPERLRFDFAHFEGVKAAELKQVEELVNAQIRCNHELNTAEMAIDEAKEKGAMALFGEKYDEKVRVVTMGDFSIELCGGTHVGRTGDIGLFKITSEAGIAAGVRRIEAVTGAAAMAYVAEQQAMLDEAAGLLKSDSASVVAKLKAQLDKTKQLEKELSQLKDKLAAAASADMAGDAQDINGVKVLVKKLEGVDPGSLRGLQDELKQKLKSAIILLGTAKDGKVNLIAGVSNDLTAKVKAGELVAMVAQQVGGKGGGRPDMAQAGGTQVENLDAALASASTWIAERLA</sequence>
<accession>Q12PX7</accession>
<keyword id="KW-0030">Aminoacyl-tRNA synthetase</keyword>
<keyword id="KW-0067">ATP-binding</keyword>
<keyword id="KW-0963">Cytoplasm</keyword>
<keyword id="KW-0436">Ligase</keyword>
<keyword id="KW-0479">Metal-binding</keyword>
<keyword id="KW-0547">Nucleotide-binding</keyword>
<keyword id="KW-0648">Protein biosynthesis</keyword>
<keyword id="KW-1185">Reference proteome</keyword>
<keyword id="KW-0694">RNA-binding</keyword>
<keyword id="KW-0820">tRNA-binding</keyword>
<keyword id="KW-0862">Zinc</keyword>
<reference key="1">
    <citation type="submission" date="2006-03" db="EMBL/GenBank/DDBJ databases">
        <title>Complete sequence of Shewanella denitrificans OS217.</title>
        <authorList>
            <consortium name="US DOE Joint Genome Institute"/>
            <person name="Copeland A."/>
            <person name="Lucas S."/>
            <person name="Lapidus A."/>
            <person name="Barry K."/>
            <person name="Detter J.C."/>
            <person name="Glavina del Rio T."/>
            <person name="Hammon N."/>
            <person name="Israni S."/>
            <person name="Dalin E."/>
            <person name="Tice H."/>
            <person name="Pitluck S."/>
            <person name="Brettin T."/>
            <person name="Bruce D."/>
            <person name="Han C."/>
            <person name="Tapia R."/>
            <person name="Gilna P."/>
            <person name="Kiss H."/>
            <person name="Schmutz J."/>
            <person name="Larimer F."/>
            <person name="Land M."/>
            <person name="Hauser L."/>
            <person name="Kyrpides N."/>
            <person name="Lykidis A."/>
            <person name="Richardson P."/>
        </authorList>
    </citation>
    <scope>NUCLEOTIDE SEQUENCE [LARGE SCALE GENOMIC DNA]</scope>
    <source>
        <strain>OS217 / ATCC BAA-1090 / DSM 15013</strain>
    </source>
</reference>
<organism>
    <name type="scientific">Shewanella denitrificans (strain OS217 / ATCC BAA-1090 / DSM 15013)</name>
    <dbReference type="NCBI Taxonomy" id="318161"/>
    <lineage>
        <taxon>Bacteria</taxon>
        <taxon>Pseudomonadati</taxon>
        <taxon>Pseudomonadota</taxon>
        <taxon>Gammaproteobacteria</taxon>
        <taxon>Alteromonadales</taxon>
        <taxon>Shewanellaceae</taxon>
        <taxon>Shewanella</taxon>
    </lineage>
</organism>
<comment type="function">
    <text evidence="1">Catalyzes the attachment of alanine to tRNA(Ala) in a two-step reaction: alanine is first activated by ATP to form Ala-AMP and then transferred to the acceptor end of tRNA(Ala). Also edits incorrectly charged Ser-tRNA(Ala) and Gly-tRNA(Ala) via its editing domain.</text>
</comment>
<comment type="catalytic activity">
    <reaction evidence="1">
        <text>tRNA(Ala) + L-alanine + ATP = L-alanyl-tRNA(Ala) + AMP + diphosphate</text>
        <dbReference type="Rhea" id="RHEA:12540"/>
        <dbReference type="Rhea" id="RHEA-COMP:9657"/>
        <dbReference type="Rhea" id="RHEA-COMP:9923"/>
        <dbReference type="ChEBI" id="CHEBI:30616"/>
        <dbReference type="ChEBI" id="CHEBI:33019"/>
        <dbReference type="ChEBI" id="CHEBI:57972"/>
        <dbReference type="ChEBI" id="CHEBI:78442"/>
        <dbReference type="ChEBI" id="CHEBI:78497"/>
        <dbReference type="ChEBI" id="CHEBI:456215"/>
        <dbReference type="EC" id="6.1.1.7"/>
    </reaction>
</comment>
<comment type="cofactor">
    <cofactor evidence="1">
        <name>Zn(2+)</name>
        <dbReference type="ChEBI" id="CHEBI:29105"/>
    </cofactor>
    <text evidence="1">Binds 1 zinc ion per subunit.</text>
</comment>
<comment type="subcellular location">
    <subcellularLocation>
        <location evidence="1">Cytoplasm</location>
    </subcellularLocation>
</comment>
<comment type="domain">
    <text evidence="1">Consists of three domains; the N-terminal catalytic domain, the editing domain and the C-terminal C-Ala domain. The editing domain removes incorrectly charged amino acids, while the C-Ala domain, along with tRNA(Ala), serves as a bridge to cooperatively bring together the editing and aminoacylation centers thus stimulating deacylation of misacylated tRNAs.</text>
</comment>
<comment type="similarity">
    <text evidence="1">Belongs to the class-II aminoacyl-tRNA synthetase family.</text>
</comment>
<protein>
    <recommendedName>
        <fullName evidence="1">Alanine--tRNA ligase</fullName>
        <ecNumber evidence="1">6.1.1.7</ecNumber>
    </recommendedName>
    <alternativeName>
        <fullName evidence="1">Alanyl-tRNA synthetase</fullName>
        <shortName evidence="1">AlaRS</shortName>
    </alternativeName>
</protein>
<gene>
    <name evidence="1" type="primary">alaS</name>
    <name type="ordered locus">Sden_1213</name>
</gene>
<dbReference type="EC" id="6.1.1.7" evidence="1"/>
<dbReference type="EMBL" id="CP000302">
    <property type="protein sequence ID" value="ABE54499.1"/>
    <property type="molecule type" value="Genomic_DNA"/>
</dbReference>
<dbReference type="RefSeq" id="WP_011495658.1">
    <property type="nucleotide sequence ID" value="NC_007954.1"/>
</dbReference>
<dbReference type="SMR" id="Q12PX7"/>
<dbReference type="STRING" id="318161.Sden_1213"/>
<dbReference type="KEGG" id="sdn:Sden_1213"/>
<dbReference type="eggNOG" id="COG0013">
    <property type="taxonomic scope" value="Bacteria"/>
</dbReference>
<dbReference type="HOGENOM" id="CLU_004485_1_1_6"/>
<dbReference type="OrthoDB" id="9803884at2"/>
<dbReference type="Proteomes" id="UP000001982">
    <property type="component" value="Chromosome"/>
</dbReference>
<dbReference type="GO" id="GO:0005829">
    <property type="term" value="C:cytosol"/>
    <property type="evidence" value="ECO:0007669"/>
    <property type="project" value="TreeGrafter"/>
</dbReference>
<dbReference type="GO" id="GO:0004813">
    <property type="term" value="F:alanine-tRNA ligase activity"/>
    <property type="evidence" value="ECO:0007669"/>
    <property type="project" value="UniProtKB-UniRule"/>
</dbReference>
<dbReference type="GO" id="GO:0002161">
    <property type="term" value="F:aminoacyl-tRNA deacylase activity"/>
    <property type="evidence" value="ECO:0007669"/>
    <property type="project" value="TreeGrafter"/>
</dbReference>
<dbReference type="GO" id="GO:0005524">
    <property type="term" value="F:ATP binding"/>
    <property type="evidence" value="ECO:0007669"/>
    <property type="project" value="UniProtKB-UniRule"/>
</dbReference>
<dbReference type="GO" id="GO:0000049">
    <property type="term" value="F:tRNA binding"/>
    <property type="evidence" value="ECO:0007669"/>
    <property type="project" value="UniProtKB-KW"/>
</dbReference>
<dbReference type="GO" id="GO:0008270">
    <property type="term" value="F:zinc ion binding"/>
    <property type="evidence" value="ECO:0007669"/>
    <property type="project" value="UniProtKB-UniRule"/>
</dbReference>
<dbReference type="GO" id="GO:0006419">
    <property type="term" value="P:alanyl-tRNA aminoacylation"/>
    <property type="evidence" value="ECO:0007669"/>
    <property type="project" value="UniProtKB-UniRule"/>
</dbReference>
<dbReference type="GO" id="GO:0045892">
    <property type="term" value="P:negative regulation of DNA-templated transcription"/>
    <property type="evidence" value="ECO:0007669"/>
    <property type="project" value="TreeGrafter"/>
</dbReference>
<dbReference type="CDD" id="cd00673">
    <property type="entry name" value="AlaRS_core"/>
    <property type="match status" value="1"/>
</dbReference>
<dbReference type="FunFam" id="2.40.30.130:FF:000001">
    <property type="entry name" value="Alanine--tRNA ligase"/>
    <property type="match status" value="1"/>
</dbReference>
<dbReference type="FunFam" id="3.10.310.40:FF:000001">
    <property type="entry name" value="Alanine--tRNA ligase"/>
    <property type="match status" value="1"/>
</dbReference>
<dbReference type="FunFam" id="3.30.54.20:FF:000001">
    <property type="entry name" value="Alanine--tRNA ligase"/>
    <property type="match status" value="1"/>
</dbReference>
<dbReference type="FunFam" id="3.30.930.10:FF:000004">
    <property type="entry name" value="Alanine--tRNA ligase"/>
    <property type="match status" value="1"/>
</dbReference>
<dbReference type="FunFam" id="3.30.980.10:FF:000004">
    <property type="entry name" value="Alanine--tRNA ligase, cytoplasmic"/>
    <property type="match status" value="1"/>
</dbReference>
<dbReference type="Gene3D" id="2.40.30.130">
    <property type="match status" value="1"/>
</dbReference>
<dbReference type="Gene3D" id="3.10.310.40">
    <property type="match status" value="1"/>
</dbReference>
<dbReference type="Gene3D" id="3.30.54.20">
    <property type="match status" value="1"/>
</dbReference>
<dbReference type="Gene3D" id="6.10.250.550">
    <property type="match status" value="1"/>
</dbReference>
<dbReference type="Gene3D" id="3.30.930.10">
    <property type="entry name" value="Bira Bifunctional Protein, Domain 2"/>
    <property type="match status" value="1"/>
</dbReference>
<dbReference type="Gene3D" id="3.30.980.10">
    <property type="entry name" value="Threonyl-trna Synthetase, Chain A, domain 2"/>
    <property type="match status" value="1"/>
</dbReference>
<dbReference type="HAMAP" id="MF_00036_B">
    <property type="entry name" value="Ala_tRNA_synth_B"/>
    <property type="match status" value="1"/>
</dbReference>
<dbReference type="InterPro" id="IPR045864">
    <property type="entry name" value="aa-tRNA-synth_II/BPL/LPL"/>
</dbReference>
<dbReference type="InterPro" id="IPR002318">
    <property type="entry name" value="Ala-tRNA-lgiase_IIc"/>
</dbReference>
<dbReference type="InterPro" id="IPR018162">
    <property type="entry name" value="Ala-tRNA-ligase_IIc_anticod-bd"/>
</dbReference>
<dbReference type="InterPro" id="IPR018165">
    <property type="entry name" value="Ala-tRNA-synth_IIc_core"/>
</dbReference>
<dbReference type="InterPro" id="IPR018164">
    <property type="entry name" value="Ala-tRNA-synth_IIc_N"/>
</dbReference>
<dbReference type="InterPro" id="IPR050058">
    <property type="entry name" value="Ala-tRNA_ligase"/>
</dbReference>
<dbReference type="InterPro" id="IPR023033">
    <property type="entry name" value="Ala_tRNA_ligase_euk/bac"/>
</dbReference>
<dbReference type="InterPro" id="IPR003156">
    <property type="entry name" value="DHHA1_dom"/>
</dbReference>
<dbReference type="InterPro" id="IPR018163">
    <property type="entry name" value="Thr/Ala-tRNA-synth_IIc_edit"/>
</dbReference>
<dbReference type="InterPro" id="IPR009000">
    <property type="entry name" value="Transl_B-barrel_sf"/>
</dbReference>
<dbReference type="InterPro" id="IPR012947">
    <property type="entry name" value="tRNA_SAD"/>
</dbReference>
<dbReference type="NCBIfam" id="TIGR00344">
    <property type="entry name" value="alaS"/>
    <property type="match status" value="1"/>
</dbReference>
<dbReference type="PANTHER" id="PTHR11777:SF9">
    <property type="entry name" value="ALANINE--TRNA LIGASE, CYTOPLASMIC"/>
    <property type="match status" value="1"/>
</dbReference>
<dbReference type="PANTHER" id="PTHR11777">
    <property type="entry name" value="ALANYL-TRNA SYNTHETASE"/>
    <property type="match status" value="1"/>
</dbReference>
<dbReference type="Pfam" id="PF02272">
    <property type="entry name" value="DHHA1"/>
    <property type="match status" value="1"/>
</dbReference>
<dbReference type="Pfam" id="PF01411">
    <property type="entry name" value="tRNA-synt_2c"/>
    <property type="match status" value="1"/>
</dbReference>
<dbReference type="Pfam" id="PF07973">
    <property type="entry name" value="tRNA_SAD"/>
    <property type="match status" value="1"/>
</dbReference>
<dbReference type="PRINTS" id="PR00980">
    <property type="entry name" value="TRNASYNTHALA"/>
</dbReference>
<dbReference type="SMART" id="SM00863">
    <property type="entry name" value="tRNA_SAD"/>
    <property type="match status" value="1"/>
</dbReference>
<dbReference type="SUPFAM" id="SSF55681">
    <property type="entry name" value="Class II aaRS and biotin synthetases"/>
    <property type="match status" value="1"/>
</dbReference>
<dbReference type="SUPFAM" id="SSF101353">
    <property type="entry name" value="Putative anticodon-binding domain of alanyl-tRNA synthetase (AlaRS)"/>
    <property type="match status" value="1"/>
</dbReference>
<dbReference type="SUPFAM" id="SSF55186">
    <property type="entry name" value="ThrRS/AlaRS common domain"/>
    <property type="match status" value="1"/>
</dbReference>
<dbReference type="SUPFAM" id="SSF50447">
    <property type="entry name" value="Translation proteins"/>
    <property type="match status" value="1"/>
</dbReference>
<dbReference type="PROSITE" id="PS50860">
    <property type="entry name" value="AA_TRNA_LIGASE_II_ALA"/>
    <property type="match status" value="1"/>
</dbReference>
<feature type="chain" id="PRO_0000347784" description="Alanine--tRNA ligase">
    <location>
        <begin position="1"/>
        <end position="874"/>
    </location>
</feature>
<feature type="binding site" evidence="1">
    <location>
        <position position="562"/>
    </location>
    <ligand>
        <name>Zn(2+)</name>
        <dbReference type="ChEBI" id="CHEBI:29105"/>
    </ligand>
</feature>
<feature type="binding site" evidence="1">
    <location>
        <position position="566"/>
    </location>
    <ligand>
        <name>Zn(2+)</name>
        <dbReference type="ChEBI" id="CHEBI:29105"/>
    </ligand>
</feature>
<feature type="binding site" evidence="1">
    <location>
        <position position="664"/>
    </location>
    <ligand>
        <name>Zn(2+)</name>
        <dbReference type="ChEBI" id="CHEBI:29105"/>
    </ligand>
</feature>
<feature type="binding site" evidence="1">
    <location>
        <position position="668"/>
    </location>
    <ligand>
        <name>Zn(2+)</name>
        <dbReference type="ChEBI" id="CHEBI:29105"/>
    </ligand>
</feature>
<evidence type="ECO:0000255" key="1">
    <source>
        <dbReference type="HAMAP-Rule" id="MF_00036"/>
    </source>
</evidence>
<proteinExistence type="inferred from homology"/>
<name>SYA_SHEDO</name>